<protein>
    <recommendedName>
        <fullName>Ecdysone receptor</fullName>
    </recommendedName>
    <alternativeName>
        <fullName>20-hydroxy-ecdysone receptor</fullName>
        <shortName>20E receptor</shortName>
    </alternativeName>
    <alternativeName>
        <fullName>EcRH</fullName>
    </alternativeName>
    <alternativeName>
        <fullName>Ecdysteroid receptor</fullName>
    </alternativeName>
    <alternativeName>
        <fullName>Nuclear receptor subfamily 1 group H member 1</fullName>
    </alternativeName>
</protein>
<dbReference type="EMBL" id="M74078">
    <property type="protein sequence ID" value="AAA28498.1"/>
    <property type="molecule type" value="mRNA"/>
</dbReference>
<dbReference type="EMBL" id="S63761">
    <property type="protein sequence ID" value="AAB27496.2"/>
    <property type="molecule type" value="mRNA"/>
</dbReference>
<dbReference type="EMBL" id="AE013599">
    <property type="protein sequence ID" value="AAF57278.3"/>
    <property type="molecule type" value="Genomic_DNA"/>
</dbReference>
<dbReference type="EMBL" id="AE013599">
    <property type="protein sequence ID" value="AAF57280.2"/>
    <property type="molecule type" value="Genomic_DNA"/>
</dbReference>
<dbReference type="EMBL" id="AE013599">
    <property type="protein sequence ID" value="AAM68347.1"/>
    <property type="molecule type" value="Genomic_DNA"/>
</dbReference>
<dbReference type="EMBL" id="AY075461">
    <property type="protein sequence ID" value="AAL68274.1"/>
    <property type="molecule type" value="mRNA"/>
</dbReference>
<dbReference type="EMBL" id="AY058575">
    <property type="protein sequence ID" value="AAL13804.1"/>
    <property type="status" value="ALT_INIT"/>
    <property type="molecule type" value="mRNA"/>
</dbReference>
<dbReference type="EMBL" id="BT012469">
    <property type="protein sequence ID" value="AAS93740.1"/>
    <property type="molecule type" value="mRNA"/>
</dbReference>
<dbReference type="EMBL" id="BT015234">
    <property type="protein sequence ID" value="AAT94463.1"/>
    <property type="molecule type" value="mRNA"/>
</dbReference>
<dbReference type="PIR" id="A40709">
    <property type="entry name" value="A40709"/>
</dbReference>
<dbReference type="PIR" id="A41055">
    <property type="entry name" value="A41055"/>
</dbReference>
<dbReference type="RefSeq" id="NP_001163061.1">
    <molecule id="P34021-1"/>
    <property type="nucleotide sequence ID" value="NM_001169590.2"/>
</dbReference>
<dbReference type="RefSeq" id="NP_724456.1">
    <molecule id="P34021-2"/>
    <property type="nucleotide sequence ID" value="NM_165461.3"/>
</dbReference>
<dbReference type="RefSeq" id="NP_724457.1">
    <molecule id="P34021-2"/>
    <property type="nucleotide sequence ID" value="NM_165462.2"/>
</dbReference>
<dbReference type="RefSeq" id="NP_724458.1">
    <molecule id="P34021-2"/>
    <property type="nucleotide sequence ID" value="NM_165463.2"/>
</dbReference>
<dbReference type="RefSeq" id="NP_724459.1">
    <molecule id="P34021-3"/>
    <property type="nucleotide sequence ID" value="NM_165464.3"/>
</dbReference>
<dbReference type="RefSeq" id="NP_724460.1">
    <molecule id="P34021-1"/>
    <property type="nucleotide sequence ID" value="NM_165465.3"/>
</dbReference>
<dbReference type="PDB" id="1R0N">
    <property type="method" value="X-ray"/>
    <property type="resolution" value="2.60 A"/>
    <property type="chains" value="B=256-364"/>
</dbReference>
<dbReference type="PDB" id="1R0O">
    <property type="method" value="X-ray"/>
    <property type="resolution" value="2.24 A"/>
    <property type="chains" value="B=256-364"/>
</dbReference>
<dbReference type="PDB" id="2HAN">
    <property type="method" value="X-ray"/>
    <property type="resolution" value="1.95 A"/>
    <property type="chains" value="B=256-365"/>
</dbReference>
<dbReference type="PDBsum" id="1R0N"/>
<dbReference type="PDBsum" id="1R0O"/>
<dbReference type="PDBsum" id="2HAN"/>
<dbReference type="SMR" id="P34021"/>
<dbReference type="BioGRID" id="61444">
    <property type="interactions" value="120"/>
</dbReference>
<dbReference type="DIP" id="DIP-158N"/>
<dbReference type="FunCoup" id="P34021">
    <property type="interactions" value="197"/>
</dbReference>
<dbReference type="IntAct" id="P34021">
    <property type="interactions" value="40"/>
</dbReference>
<dbReference type="MINT" id="P34021"/>
<dbReference type="STRING" id="7227.FBpp0291631"/>
<dbReference type="BindingDB" id="P34021"/>
<dbReference type="ChEMBL" id="CHEMBL5676"/>
<dbReference type="GlyGen" id="P34021">
    <property type="glycosylation" value="1 site"/>
</dbReference>
<dbReference type="PaxDb" id="7227-FBpp0291631"/>
<dbReference type="EnsemblMetazoa" id="FBtr0086008">
    <molecule id="P34021-2"/>
    <property type="protein sequence ID" value="FBpp0085349"/>
    <property type="gene ID" value="FBgn0000546"/>
</dbReference>
<dbReference type="EnsemblMetazoa" id="FBtr0086009">
    <molecule id="P34021-2"/>
    <property type="protein sequence ID" value="FBpp0085350"/>
    <property type="gene ID" value="FBgn0000546"/>
</dbReference>
<dbReference type="EnsemblMetazoa" id="FBtr0086010">
    <molecule id="P34021-2"/>
    <property type="protein sequence ID" value="FBpp0085351"/>
    <property type="gene ID" value="FBgn0000546"/>
</dbReference>
<dbReference type="EnsemblMetazoa" id="FBtr0086011">
    <molecule id="P34021-1"/>
    <property type="protein sequence ID" value="FBpp0085352"/>
    <property type="gene ID" value="FBgn0000546"/>
</dbReference>
<dbReference type="EnsemblMetazoa" id="FBtr0086012">
    <molecule id="P34021-3"/>
    <property type="protein sequence ID" value="FBpp0085353"/>
    <property type="gene ID" value="FBgn0000546"/>
</dbReference>
<dbReference type="EnsemblMetazoa" id="FBtr0302439">
    <molecule id="P34021-1"/>
    <property type="protein sequence ID" value="FBpp0291631"/>
    <property type="gene ID" value="FBgn0000546"/>
</dbReference>
<dbReference type="GeneID" id="35540"/>
<dbReference type="KEGG" id="dme:Dmel_CG1765"/>
<dbReference type="AGR" id="FB:FBgn0000546"/>
<dbReference type="CTD" id="35540"/>
<dbReference type="FlyBase" id="FBgn0000546">
    <property type="gene designation" value="EcR"/>
</dbReference>
<dbReference type="VEuPathDB" id="VectorBase:FBgn0000546"/>
<dbReference type="eggNOG" id="KOG3575">
    <property type="taxonomic scope" value="Eukaryota"/>
</dbReference>
<dbReference type="GeneTree" id="ENSGT00940000173863"/>
<dbReference type="InParanoid" id="P34021"/>
<dbReference type="OMA" id="GMSLNTH"/>
<dbReference type="OrthoDB" id="5837785at2759"/>
<dbReference type="PhylomeDB" id="P34021"/>
<dbReference type="Reactome" id="R-DME-159418">
    <property type="pathway name" value="Recycling of bile acids and salts"/>
</dbReference>
<dbReference type="Reactome" id="R-DME-383280">
    <property type="pathway name" value="Nuclear Receptor transcription pathway"/>
</dbReference>
<dbReference type="Reactome" id="R-DME-4090294">
    <property type="pathway name" value="SUMOylation of intracellular receptors"/>
</dbReference>
<dbReference type="Reactome" id="R-DME-8866427">
    <property type="pathway name" value="VLDLR internalisation and degradation"/>
</dbReference>
<dbReference type="Reactome" id="R-DME-9029569">
    <property type="pathway name" value="NR1H3 &amp; NR1H2 regulate gene expression linked to cholesterol transport and efflux"/>
</dbReference>
<dbReference type="Reactome" id="R-DME-9623433">
    <property type="pathway name" value="NR1H2 &amp; NR1H3 regulate gene expression to control bile acid homeostasis"/>
</dbReference>
<dbReference type="SignaLink" id="P34021"/>
<dbReference type="BioGRID-ORCS" id="35540">
    <property type="hits" value="1 hit in 3 CRISPR screens"/>
</dbReference>
<dbReference type="EvolutionaryTrace" id="P34021"/>
<dbReference type="GenomeRNAi" id="35540"/>
<dbReference type="PRO" id="PR:P34021"/>
<dbReference type="Proteomes" id="UP000000803">
    <property type="component" value="Chromosome 2R"/>
</dbReference>
<dbReference type="Bgee" id="FBgn0000546">
    <property type="expression patterns" value="Expressed in posterior terminal follicle cell in ovary and 271 other cell types or tissues"/>
</dbReference>
<dbReference type="ExpressionAtlas" id="P34021">
    <property type="expression patterns" value="baseline and differential"/>
</dbReference>
<dbReference type="GO" id="GO:0008232">
    <property type="term" value="C:activator ecdysone receptor complex"/>
    <property type="evidence" value="ECO:0000314"/>
    <property type="project" value="FlyBase"/>
</dbReference>
<dbReference type="GO" id="GO:0005737">
    <property type="term" value="C:cytoplasm"/>
    <property type="evidence" value="ECO:0000314"/>
    <property type="project" value="FlyBase"/>
</dbReference>
<dbReference type="GO" id="GO:0030425">
    <property type="term" value="C:dendrite"/>
    <property type="evidence" value="ECO:0000315"/>
    <property type="project" value="FlyBase"/>
</dbReference>
<dbReference type="GO" id="GO:0008230">
    <property type="term" value="C:ecdysone receptor holocomplex"/>
    <property type="evidence" value="ECO:0000315"/>
    <property type="project" value="CAFA"/>
</dbReference>
<dbReference type="GO" id="GO:0005634">
    <property type="term" value="C:nucleus"/>
    <property type="evidence" value="ECO:0000314"/>
    <property type="project" value="FlyBase"/>
</dbReference>
<dbReference type="GO" id="GO:0005700">
    <property type="term" value="C:polytene chromosome"/>
    <property type="evidence" value="ECO:0000314"/>
    <property type="project" value="UniProtKB"/>
</dbReference>
<dbReference type="GO" id="GO:0008231">
    <property type="term" value="C:repressor ecdysone receptor complex"/>
    <property type="evidence" value="ECO:0000353"/>
    <property type="project" value="FlyBase"/>
</dbReference>
<dbReference type="GO" id="GO:0090575">
    <property type="term" value="C:RNA polymerase II transcription regulator complex"/>
    <property type="evidence" value="ECO:0000318"/>
    <property type="project" value="GO_Central"/>
</dbReference>
<dbReference type="GO" id="GO:0001046">
    <property type="term" value="F:core promoter sequence-specific DNA binding"/>
    <property type="evidence" value="ECO:0000315"/>
    <property type="project" value="CAFA"/>
</dbReference>
<dbReference type="GO" id="GO:0003677">
    <property type="term" value="F:DNA binding"/>
    <property type="evidence" value="ECO:0000314"/>
    <property type="project" value="FlyBase"/>
</dbReference>
<dbReference type="GO" id="GO:0001228">
    <property type="term" value="F:DNA-binding transcription activator activity, RNA polymerase II-specific"/>
    <property type="evidence" value="ECO:0000314"/>
    <property type="project" value="FlyBase"/>
</dbReference>
<dbReference type="GO" id="GO:0000981">
    <property type="term" value="F:DNA-binding transcription factor activity, RNA polymerase II-specific"/>
    <property type="evidence" value="ECO:0000314"/>
    <property type="project" value="FlyBase"/>
</dbReference>
<dbReference type="GO" id="GO:0140297">
    <property type="term" value="F:DNA-binding transcription factor binding"/>
    <property type="evidence" value="ECO:0000353"/>
    <property type="project" value="FlyBase"/>
</dbReference>
<dbReference type="GO" id="GO:0035100">
    <property type="term" value="F:ecdysone binding"/>
    <property type="evidence" value="ECO:0000314"/>
    <property type="project" value="FlyBase"/>
</dbReference>
<dbReference type="GO" id="GO:0004879">
    <property type="term" value="F:nuclear receptor activity"/>
    <property type="evidence" value="ECO:0000314"/>
    <property type="project" value="FlyBase"/>
</dbReference>
<dbReference type="GO" id="GO:0046982">
    <property type="term" value="F:protein heterodimerization activity"/>
    <property type="evidence" value="ECO:0000315"/>
    <property type="project" value="CAFA"/>
</dbReference>
<dbReference type="GO" id="GO:0042803">
    <property type="term" value="F:protein homodimerization activity"/>
    <property type="evidence" value="ECO:0000315"/>
    <property type="project" value="CAFA"/>
</dbReference>
<dbReference type="GO" id="GO:0000978">
    <property type="term" value="F:RNA polymerase II cis-regulatory region sequence-specific DNA binding"/>
    <property type="evidence" value="ECO:0000318"/>
    <property type="project" value="GO_Central"/>
</dbReference>
<dbReference type="GO" id="GO:0000977">
    <property type="term" value="F:RNA polymerase II transcription regulatory region sequence-specific DNA binding"/>
    <property type="evidence" value="ECO:0000314"/>
    <property type="project" value="FlyBase"/>
</dbReference>
<dbReference type="GO" id="GO:0005102">
    <property type="term" value="F:signaling receptor binding"/>
    <property type="evidence" value="ECO:0000353"/>
    <property type="project" value="CAFA"/>
</dbReference>
<dbReference type="GO" id="GO:0005496">
    <property type="term" value="F:steroid binding"/>
    <property type="evidence" value="ECO:0000303"/>
    <property type="project" value="FlyBase"/>
</dbReference>
<dbReference type="GO" id="GO:0000976">
    <property type="term" value="F:transcription cis-regulatory region binding"/>
    <property type="evidence" value="ECO:0000314"/>
    <property type="project" value="FlyBase"/>
</dbReference>
<dbReference type="GO" id="GO:0001223">
    <property type="term" value="F:transcription coactivator binding"/>
    <property type="evidence" value="ECO:0000353"/>
    <property type="project" value="FlyBase"/>
</dbReference>
<dbReference type="GO" id="GO:0001222">
    <property type="term" value="F:transcription corepressor binding"/>
    <property type="evidence" value="ECO:0000353"/>
    <property type="project" value="FlyBase"/>
</dbReference>
<dbReference type="GO" id="GO:0008270">
    <property type="term" value="F:zinc ion binding"/>
    <property type="evidence" value="ECO:0007669"/>
    <property type="project" value="UniProtKB-KW"/>
</dbReference>
<dbReference type="GO" id="GO:0048102">
    <property type="term" value="P:autophagic cell death"/>
    <property type="evidence" value="ECO:0000315"/>
    <property type="project" value="FlyBase"/>
</dbReference>
<dbReference type="GO" id="GO:0006914">
    <property type="term" value="P:autophagy"/>
    <property type="evidence" value="ECO:0000315"/>
    <property type="project" value="FlyBase"/>
</dbReference>
<dbReference type="GO" id="GO:0007298">
    <property type="term" value="P:border follicle cell migration"/>
    <property type="evidence" value="ECO:0000315"/>
    <property type="project" value="FlyBase"/>
</dbReference>
<dbReference type="GO" id="GO:0048738">
    <property type="term" value="P:cardiac muscle tissue development"/>
    <property type="evidence" value="ECO:0000315"/>
    <property type="project" value="FlyBase"/>
</dbReference>
<dbReference type="GO" id="GO:0010002">
    <property type="term" value="P:cardioblast differentiation"/>
    <property type="evidence" value="ECO:0000315"/>
    <property type="project" value="FlyBase"/>
</dbReference>
<dbReference type="GO" id="GO:0007155">
    <property type="term" value="P:cell adhesion"/>
    <property type="evidence" value="ECO:0000315"/>
    <property type="project" value="FlyBase"/>
</dbReference>
<dbReference type="GO" id="GO:0030154">
    <property type="term" value="P:cell differentiation"/>
    <property type="evidence" value="ECO:0000318"/>
    <property type="project" value="GO_Central"/>
</dbReference>
<dbReference type="GO" id="GO:0040003">
    <property type="term" value="P:chitin-based cuticle development"/>
    <property type="evidence" value="ECO:0000315"/>
    <property type="project" value="FlyBase"/>
</dbReference>
<dbReference type="GO" id="GO:0008362">
    <property type="term" value="P:chitin-based embryonic cuticle biosynthetic process"/>
    <property type="evidence" value="ECO:0000315"/>
    <property type="project" value="FlyBase"/>
</dbReference>
<dbReference type="GO" id="GO:0042632">
    <property type="term" value="P:cholesterol homeostasis"/>
    <property type="evidence" value="ECO:0000315"/>
    <property type="project" value="FlyBase"/>
</dbReference>
<dbReference type="GO" id="GO:0001752">
    <property type="term" value="P:compound eye photoreceptor fate commitment"/>
    <property type="evidence" value="ECO:0000315"/>
    <property type="project" value="FlyBase"/>
</dbReference>
<dbReference type="GO" id="GO:0048813">
    <property type="term" value="P:dendrite morphogenesis"/>
    <property type="evidence" value="ECO:0000303"/>
    <property type="project" value="FlyBase"/>
</dbReference>
<dbReference type="GO" id="GO:0008340">
    <property type="term" value="P:determination of adult lifespan"/>
    <property type="evidence" value="ECO:0000315"/>
    <property type="project" value="FlyBase"/>
</dbReference>
<dbReference type="GO" id="GO:0035053">
    <property type="term" value="P:dorsal vessel heart proper cell fate commitment"/>
    <property type="evidence" value="ECO:0000315"/>
    <property type="project" value="FlyBase"/>
</dbReference>
<dbReference type="GO" id="GO:0018990">
    <property type="term" value="P:ecdysis, chitin-based cuticle"/>
    <property type="evidence" value="ECO:0000315"/>
    <property type="project" value="FlyBase"/>
</dbReference>
<dbReference type="GO" id="GO:0035076">
    <property type="term" value="P:ecdysone receptor signaling pathway"/>
    <property type="evidence" value="ECO:0000314"/>
    <property type="project" value="FlyBase"/>
</dbReference>
<dbReference type="GO" id="GO:0008544">
    <property type="term" value="P:epidermis development"/>
    <property type="evidence" value="ECO:0000315"/>
    <property type="project" value="FlyBase"/>
</dbReference>
<dbReference type="GO" id="GO:0007281">
    <property type="term" value="P:germ cell development"/>
    <property type="evidence" value="ECO:0000315"/>
    <property type="project" value="FlyBase"/>
</dbReference>
<dbReference type="GO" id="GO:0007390">
    <property type="term" value="P:germ-band shortening"/>
    <property type="evidence" value="ECO:0000315"/>
    <property type="project" value="FlyBase"/>
</dbReference>
<dbReference type="GO" id="GO:0035188">
    <property type="term" value="P:hatching"/>
    <property type="evidence" value="ECO:0000315"/>
    <property type="project" value="FlyBase"/>
</dbReference>
<dbReference type="GO" id="GO:0008258">
    <property type="term" value="P:head involution"/>
    <property type="evidence" value="ECO:0000315"/>
    <property type="project" value="FlyBase"/>
</dbReference>
<dbReference type="GO" id="GO:0007488">
    <property type="term" value="P:histoblast morphogenesis"/>
    <property type="evidence" value="ECO:0000315"/>
    <property type="project" value="FlyBase"/>
</dbReference>
<dbReference type="GO" id="GO:0007476">
    <property type="term" value="P:imaginal disc-derived wing morphogenesis"/>
    <property type="evidence" value="ECO:0000315"/>
    <property type="project" value="FlyBase"/>
</dbReference>
<dbReference type="GO" id="GO:0030522">
    <property type="term" value="P:intracellular receptor signaling pathway"/>
    <property type="evidence" value="ECO:0000318"/>
    <property type="project" value="GO_Central"/>
</dbReference>
<dbReference type="GO" id="GO:0035193">
    <property type="term" value="P:larval central nervous system remodeling"/>
    <property type="evidence" value="ECO:0000315"/>
    <property type="project" value="FlyBase"/>
</dbReference>
<dbReference type="GO" id="GO:0002164">
    <property type="term" value="P:larval development"/>
    <property type="evidence" value="ECO:0000315"/>
    <property type="project" value="UniProtKB"/>
</dbReference>
<dbReference type="GO" id="GO:0035180">
    <property type="term" value="P:larval wandering behavior"/>
    <property type="evidence" value="ECO:0000315"/>
    <property type="project" value="FlyBase"/>
</dbReference>
<dbReference type="GO" id="GO:0007616">
    <property type="term" value="P:long-term memory"/>
    <property type="evidence" value="ECO:0000315"/>
    <property type="project" value="FlyBase"/>
</dbReference>
<dbReference type="GO" id="GO:0007443">
    <property type="term" value="P:Malpighian tubule morphogenesis"/>
    <property type="evidence" value="ECO:0000315"/>
    <property type="project" value="FlyBase"/>
</dbReference>
<dbReference type="GO" id="GO:0007552">
    <property type="term" value="P:metamorphosis"/>
    <property type="evidence" value="ECO:0000315"/>
    <property type="project" value="FlyBase"/>
</dbReference>
<dbReference type="GO" id="GO:0016319">
    <property type="term" value="P:mushroom body development"/>
    <property type="evidence" value="ECO:0000315"/>
    <property type="project" value="FlyBase"/>
</dbReference>
<dbReference type="GO" id="GO:0045892">
    <property type="term" value="P:negative regulation of DNA-templated transcription"/>
    <property type="evidence" value="ECO:0000304"/>
    <property type="project" value="FlyBase"/>
</dbReference>
<dbReference type="GO" id="GO:0010629">
    <property type="term" value="P:negative regulation of gene expression"/>
    <property type="evidence" value="ECO:0000315"/>
    <property type="project" value="FlyBase"/>
</dbReference>
<dbReference type="GO" id="GO:0050728">
    <property type="term" value="P:negative regulation of inflammatory response"/>
    <property type="evidence" value="ECO:0000318"/>
    <property type="project" value="GO_Central"/>
</dbReference>
<dbReference type="GO" id="GO:0000122">
    <property type="term" value="P:negative regulation of transcription by RNA polymerase II"/>
    <property type="evidence" value="ECO:0000318"/>
    <property type="project" value="GO_Central"/>
</dbReference>
<dbReference type="GO" id="GO:0016322">
    <property type="term" value="P:neuron remodeling"/>
    <property type="evidence" value="ECO:0000315"/>
    <property type="project" value="FlyBase"/>
</dbReference>
<dbReference type="GO" id="GO:0048477">
    <property type="term" value="P:oogenesis"/>
    <property type="evidence" value="ECO:0000315"/>
    <property type="project" value="FlyBase"/>
</dbReference>
<dbReference type="GO" id="GO:0007422">
    <property type="term" value="P:peripheral nervous system development"/>
    <property type="evidence" value="ECO:0000315"/>
    <property type="project" value="FlyBase"/>
</dbReference>
<dbReference type="GO" id="GO:0006911">
    <property type="term" value="P:phagocytosis, engulfment"/>
    <property type="evidence" value="ECO:0000315"/>
    <property type="project" value="FlyBase"/>
</dbReference>
<dbReference type="GO" id="GO:0043065">
    <property type="term" value="P:positive regulation of apoptotic process"/>
    <property type="evidence" value="ECO:0000315"/>
    <property type="project" value="FlyBase"/>
</dbReference>
<dbReference type="GO" id="GO:0045938">
    <property type="term" value="P:positive regulation of circadian sleep/wake cycle, sleep"/>
    <property type="evidence" value="ECO:0000315"/>
    <property type="project" value="FlyBase"/>
</dbReference>
<dbReference type="GO" id="GO:0045893">
    <property type="term" value="P:positive regulation of DNA-templated transcription"/>
    <property type="evidence" value="ECO:0000315"/>
    <property type="project" value="FlyBase"/>
</dbReference>
<dbReference type="GO" id="GO:1904801">
    <property type="term" value="P:positive regulation of neuron remodeling"/>
    <property type="evidence" value="ECO:0000315"/>
    <property type="project" value="FlyBase"/>
</dbReference>
<dbReference type="GO" id="GO:0045944">
    <property type="term" value="P:positive regulation of transcription by RNA polymerase II"/>
    <property type="evidence" value="ECO:0000315"/>
    <property type="project" value="FlyBase"/>
</dbReference>
<dbReference type="GO" id="GO:0035073">
    <property type="term" value="P:pupariation"/>
    <property type="evidence" value="ECO:0000315"/>
    <property type="project" value="FlyBase"/>
</dbReference>
<dbReference type="GO" id="GO:0043457">
    <property type="term" value="P:regulation of cellular respiration"/>
    <property type="evidence" value="ECO:0000315"/>
    <property type="project" value="FlyBase"/>
</dbReference>
<dbReference type="GO" id="GO:0040034">
    <property type="term" value="P:regulation of development, heterochronic"/>
    <property type="evidence" value="ECO:0000304"/>
    <property type="project" value="FlyBase"/>
</dbReference>
<dbReference type="GO" id="GO:0035206">
    <property type="term" value="P:regulation of hemocyte proliferation"/>
    <property type="evidence" value="ECO:0000315"/>
    <property type="project" value="FlyBase"/>
</dbReference>
<dbReference type="GO" id="GO:0016241">
    <property type="term" value="P:regulation of macroautophagy"/>
    <property type="evidence" value="ECO:0000315"/>
    <property type="project" value="FlyBase"/>
</dbReference>
<dbReference type="GO" id="GO:0035297">
    <property type="term" value="P:regulation of Malpighian tubule diameter"/>
    <property type="evidence" value="ECO:0000315"/>
    <property type="project" value="FlyBase"/>
</dbReference>
<dbReference type="GO" id="GO:1904799">
    <property type="term" value="P:regulation of neuron remodeling"/>
    <property type="evidence" value="ECO:0000315"/>
    <property type="project" value="FlyBase"/>
</dbReference>
<dbReference type="GO" id="GO:0006357">
    <property type="term" value="P:regulation of transcription by RNA polymerase II"/>
    <property type="evidence" value="ECO:0000315"/>
    <property type="project" value="FlyBase"/>
</dbReference>
<dbReference type="GO" id="GO:0042220">
    <property type="term" value="P:response to cocaine"/>
    <property type="evidence" value="ECO:0000316"/>
    <property type="project" value="FlyBase"/>
</dbReference>
<dbReference type="GO" id="GO:0035075">
    <property type="term" value="P:response to ecdysone"/>
    <property type="evidence" value="ECO:0000315"/>
    <property type="project" value="FlyBase"/>
</dbReference>
<dbReference type="GO" id="GO:0007291">
    <property type="term" value="P:sperm individualization"/>
    <property type="evidence" value="ECO:0000315"/>
    <property type="project" value="FlyBase"/>
</dbReference>
<dbReference type="CDD" id="cd07161">
    <property type="entry name" value="NR_DBD_EcR"/>
    <property type="match status" value="1"/>
</dbReference>
<dbReference type="CDD" id="cd06938">
    <property type="entry name" value="NR_LBD_EcR"/>
    <property type="match status" value="1"/>
</dbReference>
<dbReference type="DisProt" id="DP01569">
    <molecule id="P34021-2"/>
</dbReference>
<dbReference type="FunFam" id="1.10.565.10:FF:000030">
    <property type="entry name" value="Ecdysone receptor (Isoform A)"/>
    <property type="match status" value="1"/>
</dbReference>
<dbReference type="FunFam" id="3.30.50.10:FF:000031">
    <property type="entry name" value="Ecdysone receptor A1"/>
    <property type="match status" value="1"/>
</dbReference>
<dbReference type="Gene3D" id="3.30.50.10">
    <property type="entry name" value="Erythroid Transcription Factor GATA-1, subunit A"/>
    <property type="match status" value="1"/>
</dbReference>
<dbReference type="Gene3D" id="1.10.565.10">
    <property type="entry name" value="Retinoid X Receptor"/>
    <property type="match status" value="1"/>
</dbReference>
<dbReference type="IDEAL" id="IID50251"/>
<dbReference type="InterPro" id="IPR003069">
    <property type="entry name" value="Ecdystd_rcpt"/>
</dbReference>
<dbReference type="InterPro" id="IPR035500">
    <property type="entry name" value="NHR-like_dom_sf"/>
</dbReference>
<dbReference type="InterPro" id="IPR041889">
    <property type="entry name" value="NR_LBD_EcR"/>
</dbReference>
<dbReference type="InterPro" id="IPR000536">
    <property type="entry name" value="Nucl_hrmn_rcpt_lig-bd"/>
</dbReference>
<dbReference type="InterPro" id="IPR050234">
    <property type="entry name" value="Nuclear_hormone_rcpt_NR1"/>
</dbReference>
<dbReference type="InterPro" id="IPR001723">
    <property type="entry name" value="Nuclear_hrmn_rcpt"/>
</dbReference>
<dbReference type="InterPro" id="IPR001628">
    <property type="entry name" value="Znf_hrmn_rcpt"/>
</dbReference>
<dbReference type="InterPro" id="IPR013088">
    <property type="entry name" value="Znf_NHR/GATA"/>
</dbReference>
<dbReference type="PANTHER" id="PTHR24082:SF507">
    <property type="entry name" value="BILE ACID RECEPTOR-RELATED"/>
    <property type="match status" value="1"/>
</dbReference>
<dbReference type="PANTHER" id="PTHR24082">
    <property type="entry name" value="NUCLEAR HORMONE RECEPTOR"/>
    <property type="match status" value="1"/>
</dbReference>
<dbReference type="Pfam" id="PF00104">
    <property type="entry name" value="Hormone_recep"/>
    <property type="match status" value="1"/>
</dbReference>
<dbReference type="Pfam" id="PF00105">
    <property type="entry name" value="zf-C4"/>
    <property type="match status" value="1"/>
</dbReference>
<dbReference type="PRINTS" id="PR01283">
    <property type="entry name" value="ECDYSTEROIDR"/>
</dbReference>
<dbReference type="PRINTS" id="PR00398">
    <property type="entry name" value="STRDHORMONER"/>
</dbReference>
<dbReference type="PRINTS" id="PR00047">
    <property type="entry name" value="STROIDFINGER"/>
</dbReference>
<dbReference type="SMART" id="SM00430">
    <property type="entry name" value="HOLI"/>
    <property type="match status" value="1"/>
</dbReference>
<dbReference type="SMART" id="SM00399">
    <property type="entry name" value="ZnF_C4"/>
    <property type="match status" value="1"/>
</dbReference>
<dbReference type="SUPFAM" id="SSF57716">
    <property type="entry name" value="Glucocorticoid receptor-like (DNA-binding domain)"/>
    <property type="match status" value="1"/>
</dbReference>
<dbReference type="SUPFAM" id="SSF48508">
    <property type="entry name" value="Nuclear receptor ligand-binding domain"/>
    <property type="match status" value="1"/>
</dbReference>
<dbReference type="PROSITE" id="PS51843">
    <property type="entry name" value="NR_LBD"/>
    <property type="match status" value="1"/>
</dbReference>
<dbReference type="PROSITE" id="PS00031">
    <property type="entry name" value="NUCLEAR_REC_DBD_1"/>
    <property type="match status" value="1"/>
</dbReference>
<dbReference type="PROSITE" id="PS51030">
    <property type="entry name" value="NUCLEAR_REC_DBD_2"/>
    <property type="match status" value="1"/>
</dbReference>
<name>ECR_DROME</name>
<reference key="1">
    <citation type="journal article" date="1991" name="Cell">
        <title>The Drosophila EcR gene encodes an ecdysone receptor, a new member of the steroid receptor superfamily.</title>
        <authorList>
            <person name="Koelle M.R."/>
            <person name="Talbot W.S."/>
            <person name="Segraves W.A."/>
            <person name="Bender M.T."/>
            <person name="Cherbas P."/>
            <person name="Hogness D.S."/>
        </authorList>
    </citation>
    <scope>NUCLEOTIDE SEQUENCE [MRNA] (ISOFORM ECR-B1)</scope>
    <scope>FUNCTION</scope>
    <scope>SUBCELLULAR LOCATION</scope>
    <scope>TISSUE SPECIFICITY</scope>
    <scope>DEVELOPMENTAL STAGE</scope>
</reference>
<reference key="2">
    <citation type="journal article" date="2000" name="Science">
        <title>The genome sequence of Drosophila melanogaster.</title>
        <authorList>
            <person name="Adams M.D."/>
            <person name="Celniker S.E."/>
            <person name="Holt R.A."/>
            <person name="Evans C.A."/>
            <person name="Gocayne J.D."/>
            <person name="Amanatides P.G."/>
            <person name="Scherer S.E."/>
            <person name="Li P.W."/>
            <person name="Hoskins R.A."/>
            <person name="Galle R.F."/>
            <person name="George R.A."/>
            <person name="Lewis S.E."/>
            <person name="Richards S."/>
            <person name="Ashburner M."/>
            <person name="Henderson S.N."/>
            <person name="Sutton G.G."/>
            <person name="Wortman J.R."/>
            <person name="Yandell M.D."/>
            <person name="Zhang Q."/>
            <person name="Chen L.X."/>
            <person name="Brandon R.C."/>
            <person name="Rogers Y.-H.C."/>
            <person name="Blazej R.G."/>
            <person name="Champe M."/>
            <person name="Pfeiffer B.D."/>
            <person name="Wan K.H."/>
            <person name="Doyle C."/>
            <person name="Baxter E.G."/>
            <person name="Helt G."/>
            <person name="Nelson C.R."/>
            <person name="Miklos G.L.G."/>
            <person name="Abril J.F."/>
            <person name="Agbayani A."/>
            <person name="An H.-J."/>
            <person name="Andrews-Pfannkoch C."/>
            <person name="Baldwin D."/>
            <person name="Ballew R.M."/>
            <person name="Basu A."/>
            <person name="Baxendale J."/>
            <person name="Bayraktaroglu L."/>
            <person name="Beasley E.M."/>
            <person name="Beeson K.Y."/>
            <person name="Benos P.V."/>
            <person name="Berman B.P."/>
            <person name="Bhandari D."/>
            <person name="Bolshakov S."/>
            <person name="Borkova D."/>
            <person name="Botchan M.R."/>
            <person name="Bouck J."/>
            <person name="Brokstein P."/>
            <person name="Brottier P."/>
            <person name="Burtis K.C."/>
            <person name="Busam D.A."/>
            <person name="Butler H."/>
            <person name="Cadieu E."/>
            <person name="Center A."/>
            <person name="Chandra I."/>
            <person name="Cherry J.M."/>
            <person name="Cawley S."/>
            <person name="Dahlke C."/>
            <person name="Davenport L.B."/>
            <person name="Davies P."/>
            <person name="de Pablos B."/>
            <person name="Delcher A."/>
            <person name="Deng Z."/>
            <person name="Mays A.D."/>
            <person name="Dew I."/>
            <person name="Dietz S.M."/>
            <person name="Dodson K."/>
            <person name="Doup L.E."/>
            <person name="Downes M."/>
            <person name="Dugan-Rocha S."/>
            <person name="Dunkov B.C."/>
            <person name="Dunn P."/>
            <person name="Durbin K.J."/>
            <person name="Evangelista C.C."/>
            <person name="Ferraz C."/>
            <person name="Ferriera S."/>
            <person name="Fleischmann W."/>
            <person name="Fosler C."/>
            <person name="Gabrielian A.E."/>
            <person name="Garg N.S."/>
            <person name="Gelbart W.M."/>
            <person name="Glasser K."/>
            <person name="Glodek A."/>
            <person name="Gong F."/>
            <person name="Gorrell J.H."/>
            <person name="Gu Z."/>
            <person name="Guan P."/>
            <person name="Harris M."/>
            <person name="Harris N.L."/>
            <person name="Harvey D.A."/>
            <person name="Heiman T.J."/>
            <person name="Hernandez J.R."/>
            <person name="Houck J."/>
            <person name="Hostin D."/>
            <person name="Houston K.A."/>
            <person name="Howland T.J."/>
            <person name="Wei M.-H."/>
            <person name="Ibegwam C."/>
            <person name="Jalali M."/>
            <person name="Kalush F."/>
            <person name="Karpen G.H."/>
            <person name="Ke Z."/>
            <person name="Kennison J.A."/>
            <person name="Ketchum K.A."/>
            <person name="Kimmel B.E."/>
            <person name="Kodira C.D."/>
            <person name="Kraft C.L."/>
            <person name="Kravitz S."/>
            <person name="Kulp D."/>
            <person name="Lai Z."/>
            <person name="Lasko P."/>
            <person name="Lei Y."/>
            <person name="Levitsky A.A."/>
            <person name="Li J.H."/>
            <person name="Li Z."/>
            <person name="Liang Y."/>
            <person name="Lin X."/>
            <person name="Liu X."/>
            <person name="Mattei B."/>
            <person name="McIntosh T.C."/>
            <person name="McLeod M.P."/>
            <person name="McPherson D."/>
            <person name="Merkulov G."/>
            <person name="Milshina N.V."/>
            <person name="Mobarry C."/>
            <person name="Morris J."/>
            <person name="Moshrefi A."/>
            <person name="Mount S.M."/>
            <person name="Moy M."/>
            <person name="Murphy B."/>
            <person name="Murphy L."/>
            <person name="Muzny D.M."/>
            <person name="Nelson D.L."/>
            <person name="Nelson D.R."/>
            <person name="Nelson K.A."/>
            <person name="Nixon K."/>
            <person name="Nusskern D.R."/>
            <person name="Pacleb J.M."/>
            <person name="Palazzolo M."/>
            <person name="Pittman G.S."/>
            <person name="Pan S."/>
            <person name="Pollard J."/>
            <person name="Puri V."/>
            <person name="Reese M.G."/>
            <person name="Reinert K."/>
            <person name="Remington K."/>
            <person name="Saunders R.D.C."/>
            <person name="Scheeler F."/>
            <person name="Shen H."/>
            <person name="Shue B.C."/>
            <person name="Siden-Kiamos I."/>
            <person name="Simpson M."/>
            <person name="Skupski M.P."/>
            <person name="Smith T.J."/>
            <person name="Spier E."/>
            <person name="Spradling A.C."/>
            <person name="Stapleton M."/>
            <person name="Strong R."/>
            <person name="Sun E."/>
            <person name="Svirskas R."/>
            <person name="Tector C."/>
            <person name="Turner R."/>
            <person name="Venter E."/>
            <person name="Wang A.H."/>
            <person name="Wang X."/>
            <person name="Wang Z.-Y."/>
            <person name="Wassarman D.A."/>
            <person name="Weinstock G.M."/>
            <person name="Weissenbach J."/>
            <person name="Williams S.M."/>
            <person name="Woodage T."/>
            <person name="Worley K.C."/>
            <person name="Wu D."/>
            <person name="Yang S."/>
            <person name="Yao Q.A."/>
            <person name="Ye J."/>
            <person name="Yeh R.-F."/>
            <person name="Zaveri J.S."/>
            <person name="Zhan M."/>
            <person name="Zhang G."/>
            <person name="Zhao Q."/>
            <person name="Zheng L."/>
            <person name="Zheng X.H."/>
            <person name="Zhong F.N."/>
            <person name="Zhong W."/>
            <person name="Zhou X."/>
            <person name="Zhu S.C."/>
            <person name="Zhu X."/>
            <person name="Smith H.O."/>
            <person name="Gibbs R.A."/>
            <person name="Myers E.W."/>
            <person name="Rubin G.M."/>
            <person name="Venter J.C."/>
        </authorList>
    </citation>
    <scope>NUCLEOTIDE SEQUENCE [LARGE SCALE GENOMIC DNA]</scope>
    <source>
        <strain>Berkeley</strain>
    </source>
</reference>
<reference key="3">
    <citation type="journal article" date="2002" name="Genome Biol.">
        <title>Annotation of the Drosophila melanogaster euchromatic genome: a systematic review.</title>
        <authorList>
            <person name="Misra S."/>
            <person name="Crosby M.A."/>
            <person name="Mungall C.J."/>
            <person name="Matthews B.B."/>
            <person name="Campbell K.S."/>
            <person name="Hradecky P."/>
            <person name="Huang Y."/>
            <person name="Kaminker J.S."/>
            <person name="Millburn G.H."/>
            <person name="Prochnik S.E."/>
            <person name="Smith C.D."/>
            <person name="Tupy J.L."/>
            <person name="Whitfield E.J."/>
            <person name="Bayraktaroglu L."/>
            <person name="Berman B.P."/>
            <person name="Bettencourt B.R."/>
            <person name="Celniker S.E."/>
            <person name="de Grey A.D.N.J."/>
            <person name="Drysdale R.A."/>
            <person name="Harris N.L."/>
            <person name="Richter J."/>
            <person name="Russo S."/>
            <person name="Schroeder A.J."/>
            <person name="Shu S.Q."/>
            <person name="Stapleton M."/>
            <person name="Yamada C."/>
            <person name="Ashburner M."/>
            <person name="Gelbart W.M."/>
            <person name="Rubin G.M."/>
            <person name="Lewis S.E."/>
        </authorList>
    </citation>
    <scope>GENOME REANNOTATION</scope>
    <scope>ALTERNATIVE SPLICING</scope>
    <source>
        <strain>Berkeley</strain>
    </source>
</reference>
<reference key="4">
    <citation type="journal article" date="2002" name="Genome Biol.">
        <title>A Drosophila full-length cDNA resource.</title>
        <authorList>
            <person name="Stapleton M."/>
            <person name="Carlson J.W."/>
            <person name="Brokstein P."/>
            <person name="Yu C."/>
            <person name="Champe M."/>
            <person name="George R.A."/>
            <person name="Guarin H."/>
            <person name="Kronmiller B."/>
            <person name="Pacleb J.M."/>
            <person name="Park S."/>
            <person name="Wan K.H."/>
            <person name="Rubin G.M."/>
            <person name="Celniker S.E."/>
        </authorList>
    </citation>
    <scope>NUCLEOTIDE SEQUENCE [LARGE SCALE MRNA] (ISOFORM ECR-A)</scope>
    <source>
        <strain>Berkeley</strain>
        <tissue>Embryo</tissue>
    </source>
</reference>
<reference key="5">
    <citation type="submission" date="2004-08" db="EMBL/GenBank/DDBJ databases">
        <authorList>
            <person name="Stapleton M."/>
            <person name="Carlson J.W."/>
            <person name="Chavez C."/>
            <person name="Frise E."/>
            <person name="George R.A."/>
            <person name="Pacleb J.M."/>
            <person name="Park S."/>
            <person name="Wan K.H."/>
            <person name="Yu C."/>
            <person name="Rubin G.M."/>
            <person name="Celniker S.E."/>
        </authorList>
    </citation>
    <scope>NUCLEOTIDE SEQUENCE [LARGE SCALE MRNA] (ISOFORM ECR-B1)</scope>
    <source>
        <strain>Berkeley</strain>
        <tissue>Embryo</tissue>
    </source>
</reference>
<reference key="6">
    <citation type="journal article" date="1993" name="Cell">
        <title>Drosophila tissues with different metamorphic responses to ecdysone express different ecdysone receptor isoforms.</title>
        <authorList>
            <person name="Talbot W.S."/>
            <person name="Swyryd E.A."/>
            <person name="Hogness D.S."/>
        </authorList>
    </citation>
    <scope>ALTERNATIVE SPLICING</scope>
</reference>
<reference key="7">
    <citation type="journal article" date="1993" name="Nature">
        <title>Functional ecdysone receptor is the product of EcR and Ultraspiracle genes.</title>
        <authorList>
            <person name="Yao T.-P."/>
            <person name="Froman B.M."/>
            <person name="Jiang Z."/>
            <person name="Cherbas L."/>
            <person name="Chen J.-D."/>
            <person name="McKeown M.M."/>
            <person name="Cherbas P."/>
            <person name="Evans R.M."/>
        </authorList>
    </citation>
    <scope>SUBUNIT</scope>
</reference>
<reference key="8">
    <citation type="journal article" date="1993" name="Development">
        <title>Puffs and PCR: the in vivo dynamics of early gene expression during ecdysone responses in Drosophila.</title>
        <authorList>
            <person name="Huet F."/>
            <person name="Ruiz C."/>
            <person name="Richards G."/>
        </authorList>
    </citation>
    <scope>DEVELOPMENTAL STAGE</scope>
</reference>
<reference key="9">
    <citation type="journal article" date="2003" name="Nature">
        <title>Methylation at lysine 4 of histone H3 in ecdysone-dependent development of Drosophila.</title>
        <authorList>
            <person name="Sedkov Y."/>
            <person name="Cho E."/>
            <person name="Petruk S."/>
            <person name="Cherbas L."/>
            <person name="Smith S.T."/>
            <person name="Jones R.S."/>
            <person name="Cherbas P."/>
            <person name="Canaani E."/>
            <person name="Jaynes J.B."/>
            <person name="Mazo A."/>
        </authorList>
    </citation>
    <scope>INTERACTION WITH TRR</scope>
</reference>
<reference key="10">
    <citation type="journal article" date="2017" name="Mol. Cell">
        <title>Metazoan nuclear pores provide a scaffold for poised genes and mediate induced enhancer-promoter contacts.</title>
        <authorList>
            <person name="Pascual-Garcia P."/>
            <person name="Debo B."/>
            <person name="Aleman J.R."/>
            <person name="Talamas J.A."/>
            <person name="Lan Y."/>
            <person name="Nguyen N.H."/>
            <person name="Won K.J."/>
            <person name="Capelson M."/>
        </authorList>
    </citation>
    <scope>INTERACTION WITH NUP98</scope>
</reference>
<reference key="11">
    <citation type="journal article" date="2018" name="Dev. Cell">
        <title>A Membrane Transporter Is Required for Steroid Hormone Uptake in Drosophila.</title>
        <authorList>
            <person name="Okamoto N."/>
            <person name="Viswanatha R."/>
            <person name="Bittar R."/>
            <person name="Li Z."/>
            <person name="Haga-Yamanaka S."/>
            <person name="Perrimon N."/>
            <person name="Yamanaka N."/>
        </authorList>
    </citation>
    <scope>FUNCTION</scope>
    <scope>SUBCELLULAR LOCATION</scope>
    <scope>DISRUPTION PHENOTYPE</scope>
</reference>
<feature type="chain" id="PRO_0000053524" description="Ecdysone receptor">
    <location>
        <begin position="1"/>
        <end position="878"/>
    </location>
</feature>
<feature type="domain" description="NR LBD" evidence="2">
    <location>
        <begin position="419"/>
        <end position="654"/>
    </location>
</feature>
<feature type="DNA-binding region" description="Nuclear receptor" evidence="1">
    <location>
        <begin position="264"/>
        <end position="336"/>
    </location>
</feature>
<feature type="zinc finger region" description="NR C4-type" evidence="1">
    <location>
        <begin position="264"/>
        <end position="284"/>
    </location>
</feature>
<feature type="zinc finger region" description="NR C4-type" evidence="1">
    <location>
        <begin position="300"/>
        <end position="324"/>
    </location>
</feature>
<feature type="region of interest" description="Modulating">
    <location>
        <begin position="1"/>
        <end position="263"/>
    </location>
</feature>
<feature type="region of interest" description="Disordered" evidence="3">
    <location>
        <begin position="1"/>
        <end position="27"/>
    </location>
</feature>
<feature type="region of interest" description="Disordered" evidence="3">
    <location>
        <begin position="209"/>
        <end position="254"/>
    </location>
</feature>
<feature type="region of interest" description="Disordered" evidence="3">
    <location>
        <begin position="344"/>
        <end position="374"/>
    </location>
</feature>
<feature type="region of interest" description="Disordered" evidence="3">
    <location>
        <begin position="698"/>
        <end position="759"/>
    </location>
</feature>
<feature type="compositionally biased region" description="Gly residues" evidence="3">
    <location>
        <begin position="365"/>
        <end position="374"/>
    </location>
</feature>
<feature type="compositionally biased region" description="Low complexity" evidence="3">
    <location>
        <begin position="698"/>
        <end position="709"/>
    </location>
</feature>
<feature type="compositionally biased region" description="Low complexity" evidence="3">
    <location>
        <begin position="728"/>
        <end position="759"/>
    </location>
</feature>
<feature type="splice variant" id="VSP_003661" description="In isoform ECR-A." evidence="10">
    <original>MKRRWSNNGGFMRLPEESSSEVTSSSNGLVLPSGVNMSPSSLDSHDYCDQDLWLCGNESGSFGGSNGHGLSQQQQSVITLAMHGCSSTLPAQTTIIPINGNANGNGGSTNGQYVPGATNLGALANGMLNGGFNGMQQQIQNGHGLINSTTPSTPTTPLHLQQNLGGAGGGGIGGMGILHHANGTPNGLIGVVGGGGGVGLGVGGGGVGGLGMQHTPRSDSVNSISS</original>
    <variation>MLTTSGQQQSKQKLSTLPSHILLQQQLAASAGPSSSVSLSPSSSAALTLHVASANGGARETTSAAAVKDKLRPTPTAIKIEPMPDVISVGTVAGGSSVATVVAPAATTTSNKPNSTAAPSTSAAAANGHLVLVPNKRPRLDVTEDWMSTPSPGSVPSSAPPLSPSPGSQNHSYNMSNGYASPMSAGSYDPYSPTGKT</variation>
    <location>
        <begin position="1"/>
        <end position="226"/>
    </location>
</feature>
<feature type="splice variant" id="VSP_003662" description="In isoform ECR-B2." evidence="11">
    <original>MKRRWSNNGGFMRLPEESSSEVTSSSNGLVLPSGVNMSPSSLDSHDYCDQDLWLCGNESGSFGGSNGHGLSQQQQSVITLAMHGCSSTLPAQTTIIPINGNANGNGGSTNGQYVPGATNLGALANGMLNGGFNGMQQQIQNGHGLINSTTPSTPTTPLHLQQNLGGAGGGGIGGMGILHHANGTPNGLIGVVGGGGGVGLGVGGGGVGGLGMQHTPRSDSVNSISS</original>
    <variation>MDTCGLVAELAHYIDAY</variation>
    <location>
        <begin position="1"/>
        <end position="226"/>
    </location>
</feature>
<feature type="sequence conflict" description="In Ref. 4; AAL68274." evidence="11" ref="4">
    <original>GVAVKSEHSTTA</original>
    <variation>EWRLSRSTRRLHSRRRVSSTNITTTTSTSCWSRKRS</variation>
    <location>
        <begin position="867"/>
        <end position="878"/>
    </location>
</feature>
<feature type="turn" evidence="13">
    <location>
        <begin position="265"/>
        <end position="267"/>
    </location>
</feature>
<feature type="strand" evidence="12">
    <location>
        <begin position="268"/>
        <end position="270"/>
    </location>
</feature>
<feature type="strand" evidence="13">
    <location>
        <begin position="273"/>
        <end position="275"/>
    </location>
</feature>
<feature type="strand" evidence="13">
    <location>
        <begin position="278"/>
        <end position="280"/>
    </location>
</feature>
<feature type="helix" evidence="13">
    <location>
        <begin position="282"/>
        <end position="293"/>
    </location>
</feature>
<feature type="helix" evidence="13">
    <location>
        <begin position="312"/>
        <end position="314"/>
    </location>
</feature>
<feature type="helix" evidence="13">
    <location>
        <begin position="317"/>
        <end position="326"/>
    </location>
</feature>
<feature type="helix" evidence="13">
    <location>
        <begin position="331"/>
        <end position="333"/>
    </location>
</feature>
<feature type="helix" evidence="13">
    <location>
        <begin position="339"/>
        <end position="343"/>
    </location>
</feature>
<organism>
    <name type="scientific">Drosophila melanogaster</name>
    <name type="common">Fruit fly</name>
    <dbReference type="NCBI Taxonomy" id="7227"/>
    <lineage>
        <taxon>Eukaryota</taxon>
        <taxon>Metazoa</taxon>
        <taxon>Ecdysozoa</taxon>
        <taxon>Arthropoda</taxon>
        <taxon>Hexapoda</taxon>
        <taxon>Insecta</taxon>
        <taxon>Pterygota</taxon>
        <taxon>Neoptera</taxon>
        <taxon>Endopterygota</taxon>
        <taxon>Diptera</taxon>
        <taxon>Brachycera</taxon>
        <taxon>Muscomorpha</taxon>
        <taxon>Ephydroidea</taxon>
        <taxon>Drosophilidae</taxon>
        <taxon>Drosophila</taxon>
        <taxon>Sophophora</taxon>
    </lineage>
</organism>
<comment type="function">
    <text evidence="5 7">Receptor for ecdysone (PubMed:1913820, PubMed:30293839). Binds to ecdysone response elements (ECRES) following ecdysone-binding, and recruitment of a complex containing the histone methyltransferase trr, leads to activate transcription of target genes (PubMed:1913820, PubMed:30293839).</text>
</comment>
<comment type="subunit">
    <text evidence="4 6 9">Heterodimer of USP and ECR (PubMed:8247157). Only the heterodimer is capable of high-affinity binding to ecdysone (PubMed:8247157). Interacts with trr in an ecdysone-dependent manner (PubMed:14603321). Upon ecdysone stimulation, interacts with Nup98 (PubMed:28366641).</text>
</comment>
<comment type="subcellular location">
    <subcellularLocation>
        <location evidence="1 5 7">Nucleus</location>
    </subcellularLocation>
</comment>
<comment type="alternative products">
    <event type="alternative splicing"/>
    <isoform>
        <id>P34021-1</id>
        <name>ECR-B1</name>
        <name>B</name>
        <sequence type="displayed"/>
    </isoform>
    <isoform>
        <id>P34021-2</id>
        <name>ECR-A</name>
        <name>A</name>
        <name>D</name>
        <sequence type="described" ref="VSP_003661"/>
    </isoform>
    <isoform>
        <id>P34021-3</id>
        <name>ECR-B2</name>
        <name>C</name>
        <sequence type="described" ref="VSP_003662"/>
    </isoform>
</comment>
<comment type="tissue specificity">
    <text evidence="5">Isoform B1 predominates over isoform A in larval tissues, imaginal histoblast nests and midgut islands. Isoform A predominates over B1 in imaginal disks, and the larval prothoracic gland.</text>
</comment>
<comment type="developmental stage">
    <text evidence="5 8">In the salivary glands of mid instar larvae levels increase during puff stage 1 at 86-94 hours of development then remain relatively constant until the premetamorphic pulse of ecdysone in late larvae. Levels diminish dramatically from puff stage 7 onwards. Levels increase in the prepupal period during puff stage 13-14, the level remains stable until stage 21. A decrease in levels at puff stage 7 is also seen in the Malpighian tubules and less dramatically in the fat body and gut. In the wing disk the relatively low level remains unchanged.</text>
</comment>
<comment type="disruption phenotype">
    <text evidence="7">RNAi-mediated knockdown blocks ecdysone-dependent fat body cell migration into the pupal head.</text>
</comment>
<comment type="similarity">
    <text evidence="11">Belongs to the nuclear hormone receptor family. NR1 subfamily.</text>
</comment>
<comment type="sequence caution" evidence="11">
    <conflict type="erroneous initiation">
        <sequence resource="EMBL-CDS" id="AAL13804"/>
    </conflict>
    <text>Truncated N-terminus.</text>
</comment>
<gene>
    <name type="primary">EcR</name>
    <name type="synonym">NR1H1</name>
    <name type="ORF">CG1765</name>
</gene>
<proteinExistence type="evidence at protein level"/>
<keyword id="KW-0002">3D-structure</keyword>
<keyword id="KW-0025">Alternative splicing</keyword>
<keyword id="KW-0238">DNA-binding</keyword>
<keyword id="KW-0479">Metal-binding</keyword>
<keyword id="KW-0539">Nucleus</keyword>
<keyword id="KW-0675">Receptor</keyword>
<keyword id="KW-1185">Reference proteome</keyword>
<keyword id="KW-0804">Transcription</keyword>
<keyword id="KW-0805">Transcription regulation</keyword>
<keyword id="KW-0862">Zinc</keyword>
<keyword id="KW-0863">Zinc-finger</keyword>
<evidence type="ECO:0000255" key="1">
    <source>
        <dbReference type="PROSITE-ProRule" id="PRU00407"/>
    </source>
</evidence>
<evidence type="ECO:0000255" key="2">
    <source>
        <dbReference type="PROSITE-ProRule" id="PRU01189"/>
    </source>
</evidence>
<evidence type="ECO:0000256" key="3">
    <source>
        <dbReference type="SAM" id="MobiDB-lite"/>
    </source>
</evidence>
<evidence type="ECO:0000269" key="4">
    <source>
    </source>
</evidence>
<evidence type="ECO:0000269" key="5">
    <source>
    </source>
</evidence>
<evidence type="ECO:0000269" key="6">
    <source>
    </source>
</evidence>
<evidence type="ECO:0000269" key="7">
    <source>
    </source>
</evidence>
<evidence type="ECO:0000269" key="8">
    <source>
    </source>
</evidence>
<evidence type="ECO:0000269" key="9">
    <source>
    </source>
</evidence>
<evidence type="ECO:0000303" key="10">
    <source>
    </source>
</evidence>
<evidence type="ECO:0000305" key="11"/>
<evidence type="ECO:0007829" key="12">
    <source>
        <dbReference type="PDB" id="1R0N"/>
    </source>
</evidence>
<evidence type="ECO:0007829" key="13">
    <source>
        <dbReference type="PDB" id="2HAN"/>
    </source>
</evidence>
<sequence>MKRRWSNNGGFMRLPEESSSEVTSSSNGLVLPSGVNMSPSSLDSHDYCDQDLWLCGNESGSFGGSNGHGLSQQQQSVITLAMHGCSSTLPAQTTIIPINGNANGNGGSTNGQYVPGATNLGALANGMLNGGFNGMQQQIQNGHGLINSTTPSTPTTPLHLQQNLGGAGGGGIGGMGILHHANGTPNGLIGVVGGGGGVGLGVGGGGVGGLGMQHTPRSDSVNSISSGRDDLSPSSSLNGYSANESCDAKKSKKGPAPRVQEELCLVCGDRASGYHYNALTCEGCKGFFRRSVTKSAVYCCKFGRACEMDMYMRRKCQECRLKKCLAVGMRPECVVPENQCAMKRREKKAQKEKDKMTTSPSSQHGGNGSLASGGGQDFVKKEILDLMTCEPPQHATIPLLPDEILAKCQARNIPSLTYNQLAVIYKLIWYQDGYEQPSEEDLRRIMSQPDENESQTDVSFRHITEITILTVQLIVEFAKGLPAFTKIPQEDQITLLKACSSEVMMLRMARRYDHSSDSIFFANNRSYTRDSYKMAGMADNIEDLLHFCRQMFSMKVDNVEYALLTAIVIFSDRPGLEKAQLVEAIQSYYIDTLRIYILNRHCGDSMSLVFYAKLLSILTELRTLGNQNAEMCFSLKLKNRKLPKFLEEIWDVHAIPPSVQSHLQITQEENERLERAERMRASVGGAITAGIDCDSASTSAAAAAAQHQPQPQPQPQPSSLTQNDSQHQTQPQLQPQLPPQLQGQLQPQLQPQLQTQLQPQIQPQPQLLPVSAPVPASVTAPGSLSAVSTSSEYMGGSAAIGPITPATTSSITAAVTASSTTSAVPMGNGVGVGVGVGGNVSMYANAQTAMALMGVALHSHQEQLIGGVAVKSEHSTTA</sequence>
<accession>P34021</accession>
<accession>Q0E9N8</accession>
<accession>Q6AWL4</accession>
<accession>Q8SY10</accession>
<accession>Q95TS4</accession>
<accession>Q9V9K8</accession>